<name>PLBLE_DICDI</name>
<keyword id="KW-0325">Glycoprotein</keyword>
<keyword id="KW-0378">Hydrolase</keyword>
<keyword id="KW-0442">Lipid degradation</keyword>
<keyword id="KW-0443">Lipid metabolism</keyword>
<keyword id="KW-1185">Reference proteome</keyword>
<keyword id="KW-0964">Secreted</keyword>
<keyword id="KW-0732">Signal</keyword>
<gene>
    <name type="primary">plbE</name>
    <name type="ORF">DDB_G0277455</name>
</gene>
<dbReference type="EC" id="3.1.1.-"/>
<dbReference type="EMBL" id="AAFI02000020">
    <property type="protein sequence ID" value="EAL68690.1"/>
    <property type="molecule type" value="Genomic_DNA"/>
</dbReference>
<dbReference type="RefSeq" id="XP_642656.1">
    <property type="nucleotide sequence ID" value="XM_637564.1"/>
</dbReference>
<dbReference type="SMR" id="Q54ZI6"/>
<dbReference type="STRING" id="44689.Q54ZI6"/>
<dbReference type="GlyCosmos" id="Q54ZI6">
    <property type="glycosylation" value="6 sites, No reported glycans"/>
</dbReference>
<dbReference type="GlyGen" id="Q54ZI6">
    <property type="glycosylation" value="6 sites"/>
</dbReference>
<dbReference type="PaxDb" id="44689-DDB0231380"/>
<dbReference type="EnsemblProtists" id="EAL68690">
    <property type="protein sequence ID" value="EAL68690"/>
    <property type="gene ID" value="DDB_G0277455"/>
</dbReference>
<dbReference type="GeneID" id="8621072"/>
<dbReference type="KEGG" id="ddi:DDB_G0277455"/>
<dbReference type="dictyBase" id="DDB_G0277455">
    <property type="gene designation" value="plbE"/>
</dbReference>
<dbReference type="VEuPathDB" id="AmoebaDB:DDB_G0277455"/>
<dbReference type="eggNOG" id="KOG3774">
    <property type="taxonomic scope" value="Eukaryota"/>
</dbReference>
<dbReference type="HOGENOM" id="CLU_027106_4_0_1"/>
<dbReference type="InParanoid" id="Q54ZI6"/>
<dbReference type="OMA" id="TYEYNPR"/>
<dbReference type="PhylomeDB" id="Q54ZI6"/>
<dbReference type="PRO" id="PR:Q54ZI6"/>
<dbReference type="Proteomes" id="UP000002195">
    <property type="component" value="Chromosome 2"/>
</dbReference>
<dbReference type="GO" id="GO:0005576">
    <property type="term" value="C:extracellular region"/>
    <property type="evidence" value="ECO:0000318"/>
    <property type="project" value="GO_Central"/>
</dbReference>
<dbReference type="GO" id="GO:0004620">
    <property type="term" value="F:phospholipase activity"/>
    <property type="evidence" value="ECO:0000250"/>
    <property type="project" value="dictyBase"/>
</dbReference>
<dbReference type="GO" id="GO:0046338">
    <property type="term" value="P:phosphatidylethanolamine catabolic process"/>
    <property type="evidence" value="ECO:0000250"/>
    <property type="project" value="dictyBase"/>
</dbReference>
<dbReference type="GO" id="GO:0031161">
    <property type="term" value="P:phosphatidylinositol catabolic process"/>
    <property type="evidence" value="ECO:0000250"/>
    <property type="project" value="dictyBase"/>
</dbReference>
<dbReference type="GO" id="GO:0009395">
    <property type="term" value="P:phospholipid catabolic process"/>
    <property type="evidence" value="ECO:0000250"/>
    <property type="project" value="dictyBase"/>
</dbReference>
<dbReference type="FunFam" id="3.60.60.30:FF:000001">
    <property type="entry name" value="Phospholipase B-like protein G"/>
    <property type="match status" value="1"/>
</dbReference>
<dbReference type="Gene3D" id="3.60.60.30">
    <property type="match status" value="1"/>
</dbReference>
<dbReference type="InterPro" id="IPR007000">
    <property type="entry name" value="PLipase_B-like"/>
</dbReference>
<dbReference type="PANTHER" id="PTHR12370:SF21">
    <property type="entry name" value="PHOSPHOLIPASE B-LIKE PROTEIN E"/>
    <property type="match status" value="1"/>
</dbReference>
<dbReference type="PANTHER" id="PTHR12370">
    <property type="entry name" value="PHOSPHOLIPASE B-RELATED"/>
    <property type="match status" value="1"/>
</dbReference>
<dbReference type="Pfam" id="PF04916">
    <property type="entry name" value="Phospholip_B"/>
    <property type="match status" value="1"/>
</dbReference>
<sequence length="554" mass="63730">MKLFILLIVIVFLISNSYSLSSSDSSSDSGSDVQYYSLTSQFQVVQGKQIPGSIAWGYFKDEMNKDGWGKLSIETVSTVSDNIAFKAAGYLEGYLTWEYIYKFSGNYFNSFFNTSNIKEIPTETLTFVSDNWEYMMERVNSSSTTDPYWIQIRNAMSQQIGLYEGYNAAAGEDYQKTFIEIYMINLYGDMGDIVTLTTTPNNEFIPMDRKEVEQLMATTGHCTSIIKLTNNCSDLMSAHTSWADFSVMIRIYKRINIPVASTPYGSETLFSSYPGLLVSIDDFYQIRPSKLHLTETLNTILNQTLYQQINAQSFMYWVRNLVANRLANNGFQWVSIFVENNSGTNNIQFVVLDYKLFTPYSTELQSDLLWIVEQYPGGYQAADVTLTLWEQGYWPSYNRPYFEEVFDILGYPYYVEKFGDLFTYEYNPRANIFRRDHSKLETLQDMMNIIDYNQYKTDPFSMGYPGNSINARFDIKGGSLPSGNPIYSWFYHGTHGGIDGKAINYDMVNSFTAVARNGPTVTSDCPPFNWNDWSLISHQYMPQIYNFTWISINI</sequence>
<reference key="1">
    <citation type="journal article" date="2002" name="Nature">
        <title>Sequence and analysis of chromosome 2 of Dictyostelium discoideum.</title>
        <authorList>
            <person name="Gloeckner G."/>
            <person name="Eichinger L."/>
            <person name="Szafranski K."/>
            <person name="Pachebat J.A."/>
            <person name="Bankier A.T."/>
            <person name="Dear P.H."/>
            <person name="Lehmann R."/>
            <person name="Baumgart C."/>
            <person name="Parra G."/>
            <person name="Abril J.F."/>
            <person name="Guigo R."/>
            <person name="Kumpf K."/>
            <person name="Tunggal B."/>
            <person name="Cox E.C."/>
            <person name="Quail M.A."/>
            <person name="Platzer M."/>
            <person name="Rosenthal A."/>
            <person name="Noegel A.A."/>
        </authorList>
    </citation>
    <scope>NUCLEOTIDE SEQUENCE [LARGE SCALE GENOMIC DNA]</scope>
    <source>
        <strain>AX4</strain>
    </source>
</reference>
<reference key="2">
    <citation type="journal article" date="2005" name="Nature">
        <title>The genome of the social amoeba Dictyostelium discoideum.</title>
        <authorList>
            <person name="Eichinger L."/>
            <person name="Pachebat J.A."/>
            <person name="Gloeckner G."/>
            <person name="Rajandream M.A."/>
            <person name="Sucgang R."/>
            <person name="Berriman M."/>
            <person name="Song J."/>
            <person name="Olsen R."/>
            <person name="Szafranski K."/>
            <person name="Xu Q."/>
            <person name="Tunggal B."/>
            <person name="Kummerfeld S."/>
            <person name="Madera M."/>
            <person name="Konfortov B.A."/>
            <person name="Rivero F."/>
            <person name="Bankier A.T."/>
            <person name="Lehmann R."/>
            <person name="Hamlin N."/>
            <person name="Davies R."/>
            <person name="Gaudet P."/>
            <person name="Fey P."/>
            <person name="Pilcher K."/>
            <person name="Chen G."/>
            <person name="Saunders D."/>
            <person name="Sodergren E.J."/>
            <person name="Davis P."/>
            <person name="Kerhornou A."/>
            <person name="Nie X."/>
            <person name="Hall N."/>
            <person name="Anjard C."/>
            <person name="Hemphill L."/>
            <person name="Bason N."/>
            <person name="Farbrother P."/>
            <person name="Desany B."/>
            <person name="Just E."/>
            <person name="Morio T."/>
            <person name="Rost R."/>
            <person name="Churcher C.M."/>
            <person name="Cooper J."/>
            <person name="Haydock S."/>
            <person name="van Driessche N."/>
            <person name="Cronin A."/>
            <person name="Goodhead I."/>
            <person name="Muzny D.M."/>
            <person name="Mourier T."/>
            <person name="Pain A."/>
            <person name="Lu M."/>
            <person name="Harper D."/>
            <person name="Lindsay R."/>
            <person name="Hauser H."/>
            <person name="James K.D."/>
            <person name="Quiles M."/>
            <person name="Madan Babu M."/>
            <person name="Saito T."/>
            <person name="Buchrieser C."/>
            <person name="Wardroper A."/>
            <person name="Felder M."/>
            <person name="Thangavelu M."/>
            <person name="Johnson D."/>
            <person name="Knights A."/>
            <person name="Loulseged H."/>
            <person name="Mungall K.L."/>
            <person name="Oliver K."/>
            <person name="Price C."/>
            <person name="Quail M.A."/>
            <person name="Urushihara H."/>
            <person name="Hernandez J."/>
            <person name="Rabbinowitsch E."/>
            <person name="Steffen D."/>
            <person name="Sanders M."/>
            <person name="Ma J."/>
            <person name="Kohara Y."/>
            <person name="Sharp S."/>
            <person name="Simmonds M.N."/>
            <person name="Spiegler S."/>
            <person name="Tivey A."/>
            <person name="Sugano S."/>
            <person name="White B."/>
            <person name="Walker D."/>
            <person name="Woodward J.R."/>
            <person name="Winckler T."/>
            <person name="Tanaka Y."/>
            <person name="Shaulsky G."/>
            <person name="Schleicher M."/>
            <person name="Weinstock G.M."/>
            <person name="Rosenthal A."/>
            <person name="Cox E.C."/>
            <person name="Chisholm R.L."/>
            <person name="Gibbs R.A."/>
            <person name="Loomis W.F."/>
            <person name="Platzer M."/>
            <person name="Kay R.R."/>
            <person name="Williams J.G."/>
            <person name="Dear P.H."/>
            <person name="Noegel A.A."/>
            <person name="Barrell B.G."/>
            <person name="Kuspa A."/>
        </authorList>
    </citation>
    <scope>NUCLEOTIDE SEQUENCE [LARGE SCALE GENOMIC DNA]</scope>
    <source>
        <strain>AX4</strain>
    </source>
</reference>
<organism>
    <name type="scientific">Dictyostelium discoideum</name>
    <name type="common">Social amoeba</name>
    <dbReference type="NCBI Taxonomy" id="44689"/>
    <lineage>
        <taxon>Eukaryota</taxon>
        <taxon>Amoebozoa</taxon>
        <taxon>Evosea</taxon>
        <taxon>Eumycetozoa</taxon>
        <taxon>Dictyostelia</taxon>
        <taxon>Dictyosteliales</taxon>
        <taxon>Dictyosteliaceae</taxon>
        <taxon>Dictyostelium</taxon>
    </lineage>
</organism>
<accession>Q54ZI6</accession>
<accession>Q8MN53</accession>
<protein>
    <recommendedName>
        <fullName>Phospholipase B-like protein E</fullName>
        <ecNumber>3.1.1.-</ecNumber>
    </recommendedName>
</protein>
<proteinExistence type="inferred from homology"/>
<comment type="function">
    <text evidence="1">Probable phospholipase.</text>
</comment>
<comment type="subcellular location">
    <subcellularLocation>
        <location evidence="3">Secreted</location>
    </subcellularLocation>
</comment>
<comment type="similarity">
    <text evidence="3">Belongs to the phospholipase B-like family.</text>
</comment>
<evidence type="ECO:0000250" key="1"/>
<evidence type="ECO:0000255" key="2"/>
<evidence type="ECO:0000305" key="3"/>
<feature type="signal peptide" evidence="2">
    <location>
        <begin position="1"/>
        <end position="19"/>
    </location>
</feature>
<feature type="chain" id="PRO_0000286121" description="Phospholipase B-like protein E">
    <location>
        <begin position="20"/>
        <end position="554"/>
    </location>
</feature>
<feature type="glycosylation site" description="N-linked (GlcNAc...) asparagine" evidence="2">
    <location>
        <position position="113"/>
    </location>
</feature>
<feature type="glycosylation site" description="N-linked (GlcNAc...) asparagine" evidence="2">
    <location>
        <position position="140"/>
    </location>
</feature>
<feature type="glycosylation site" description="N-linked (GlcNAc...) asparagine" evidence="2">
    <location>
        <position position="231"/>
    </location>
</feature>
<feature type="glycosylation site" description="N-linked (GlcNAc...) asparagine" evidence="2">
    <location>
        <position position="302"/>
    </location>
</feature>
<feature type="glycosylation site" description="N-linked (GlcNAc...) asparagine" evidence="2">
    <location>
        <position position="340"/>
    </location>
</feature>
<feature type="glycosylation site" description="N-linked (GlcNAc...) asparagine" evidence="2">
    <location>
        <position position="546"/>
    </location>
</feature>